<comment type="function">
    <text evidence="2">A cytochrome P450 monooxygenase that catalyzes the conversion of C19 androgens, androst-4-ene-3,17-dione (androstenedione) and testosterone to the C18 estrogens, estrone and estradiol, respectively. Catalyzes three successive oxidations of C19 androgens: two conventional oxidations at C19 yielding 19-hydroxy and 19-oxo/19-aldehyde derivatives, followed by a third oxidative aromatization step that involves C1-beta hydrogen abstraction combined with cleavage of the C10-C19 bond to yield a phenolic A ring and formic acid. Alternatively, the third oxidative reaction yields a 19-norsteroid and formic acid. Converts dihydrotestosterone to delta1,10-dehydro 19-nordihydrotestosterone and may play a role in homeostasis of this potent androgen. Also displays 2-hydroxylase activity toward estrone. Mechanistically, uses molecular oxygen inserting one oxygen atom into a substrate, and reducing the second into a water molecule, with two electrons provided by NADPH via cytochrome P450 reductase (CPR; NADPH-ferrihemoprotein reductase).</text>
</comment>
<comment type="catalytic activity">
    <reaction evidence="2">
        <text>testosterone + 3 reduced [NADPH--hemoprotein reductase] + 3 O2 = 17beta-estradiol + formate + 3 oxidized [NADPH--hemoprotein reductase] + 4 H2O + 4 H(+)</text>
        <dbReference type="Rhea" id="RHEA:38191"/>
        <dbReference type="Rhea" id="RHEA-COMP:11964"/>
        <dbReference type="Rhea" id="RHEA-COMP:11965"/>
        <dbReference type="ChEBI" id="CHEBI:15377"/>
        <dbReference type="ChEBI" id="CHEBI:15378"/>
        <dbReference type="ChEBI" id="CHEBI:15379"/>
        <dbReference type="ChEBI" id="CHEBI:15740"/>
        <dbReference type="ChEBI" id="CHEBI:16469"/>
        <dbReference type="ChEBI" id="CHEBI:17347"/>
        <dbReference type="ChEBI" id="CHEBI:57618"/>
        <dbReference type="ChEBI" id="CHEBI:58210"/>
        <dbReference type="EC" id="1.14.14.14"/>
    </reaction>
    <physiologicalReaction direction="left-to-right" evidence="2">
        <dbReference type="Rhea" id="RHEA:38192"/>
    </physiologicalReaction>
</comment>
<comment type="catalytic activity">
    <reaction evidence="2">
        <text>androst-4-ene-3,17-dione + 3 reduced [NADPH--hemoprotein reductase] + 3 O2 = estrone + formate + 3 oxidized [NADPH--hemoprotein reductase] + 4 H2O + 4 H(+)</text>
        <dbReference type="Rhea" id="RHEA:38195"/>
        <dbReference type="Rhea" id="RHEA-COMP:11964"/>
        <dbReference type="Rhea" id="RHEA-COMP:11965"/>
        <dbReference type="ChEBI" id="CHEBI:15377"/>
        <dbReference type="ChEBI" id="CHEBI:15378"/>
        <dbReference type="ChEBI" id="CHEBI:15379"/>
        <dbReference type="ChEBI" id="CHEBI:15740"/>
        <dbReference type="ChEBI" id="CHEBI:16422"/>
        <dbReference type="ChEBI" id="CHEBI:17263"/>
        <dbReference type="ChEBI" id="CHEBI:57618"/>
        <dbReference type="ChEBI" id="CHEBI:58210"/>
        <dbReference type="EC" id="1.14.14.14"/>
    </reaction>
    <physiologicalReaction direction="left-to-right" evidence="2">
        <dbReference type="Rhea" id="RHEA:38196"/>
    </physiologicalReaction>
</comment>
<comment type="catalytic activity">
    <reaction evidence="2">
        <text>androst-4-ene-3,17-dione + reduced [NADPH--hemoprotein reductase] + O2 = 19-hydroxyandrost-4-ene-3,17-dione + oxidized [NADPH--hemoprotein reductase] + H2O + H(+)</text>
        <dbReference type="Rhea" id="RHEA:38199"/>
        <dbReference type="Rhea" id="RHEA-COMP:11964"/>
        <dbReference type="Rhea" id="RHEA-COMP:11965"/>
        <dbReference type="ChEBI" id="CHEBI:15377"/>
        <dbReference type="ChEBI" id="CHEBI:15378"/>
        <dbReference type="ChEBI" id="CHEBI:15379"/>
        <dbReference type="ChEBI" id="CHEBI:16422"/>
        <dbReference type="ChEBI" id="CHEBI:27576"/>
        <dbReference type="ChEBI" id="CHEBI:57618"/>
        <dbReference type="ChEBI" id="CHEBI:58210"/>
    </reaction>
    <physiologicalReaction direction="left-to-right" evidence="2">
        <dbReference type="Rhea" id="RHEA:38200"/>
    </physiologicalReaction>
</comment>
<comment type="catalytic activity">
    <reaction evidence="2">
        <text>19-hydroxyandrost-4-ene-3,17-dione + reduced [NADPH--hemoprotein reductase] + O2 = 19-oxo-androst-4-ene-3,17-dione + oxidized [NADPH--hemoprotein reductase] + 2 H2O + H(+)</text>
        <dbReference type="Rhea" id="RHEA:38203"/>
        <dbReference type="Rhea" id="RHEA-COMP:11964"/>
        <dbReference type="Rhea" id="RHEA-COMP:11965"/>
        <dbReference type="ChEBI" id="CHEBI:799"/>
        <dbReference type="ChEBI" id="CHEBI:15377"/>
        <dbReference type="ChEBI" id="CHEBI:15378"/>
        <dbReference type="ChEBI" id="CHEBI:15379"/>
        <dbReference type="ChEBI" id="CHEBI:27576"/>
        <dbReference type="ChEBI" id="CHEBI:57618"/>
        <dbReference type="ChEBI" id="CHEBI:58210"/>
    </reaction>
    <physiologicalReaction direction="left-to-right" evidence="2">
        <dbReference type="Rhea" id="RHEA:38204"/>
    </physiologicalReaction>
</comment>
<comment type="catalytic activity">
    <reaction evidence="2">
        <text>19-oxo-androst-4-ene-3,17-dione + reduced [NADPH--hemoprotein reductase] + O2 = estrone + formate + oxidized [NADPH--hemoprotein reductase] + H2O + 2 H(+)</text>
        <dbReference type="Rhea" id="RHEA:38207"/>
        <dbReference type="Rhea" id="RHEA-COMP:11964"/>
        <dbReference type="Rhea" id="RHEA-COMP:11965"/>
        <dbReference type="ChEBI" id="CHEBI:799"/>
        <dbReference type="ChEBI" id="CHEBI:15377"/>
        <dbReference type="ChEBI" id="CHEBI:15378"/>
        <dbReference type="ChEBI" id="CHEBI:15379"/>
        <dbReference type="ChEBI" id="CHEBI:15740"/>
        <dbReference type="ChEBI" id="CHEBI:17263"/>
        <dbReference type="ChEBI" id="CHEBI:57618"/>
        <dbReference type="ChEBI" id="CHEBI:58210"/>
    </reaction>
    <physiologicalReaction direction="left-to-right" evidence="2">
        <dbReference type="Rhea" id="RHEA:38208"/>
    </physiologicalReaction>
</comment>
<comment type="catalytic activity">
    <reaction evidence="2">
        <text>estrone + reduced [NADPH--hemoprotein reductase] + O2 = 2-hydroxyestrone + oxidized [NADPH--hemoprotein reductase] + H2O + H(+)</text>
        <dbReference type="Rhea" id="RHEA:47208"/>
        <dbReference type="Rhea" id="RHEA-COMP:11964"/>
        <dbReference type="Rhea" id="RHEA-COMP:11965"/>
        <dbReference type="ChEBI" id="CHEBI:1156"/>
        <dbReference type="ChEBI" id="CHEBI:15377"/>
        <dbReference type="ChEBI" id="CHEBI:15378"/>
        <dbReference type="ChEBI" id="CHEBI:15379"/>
        <dbReference type="ChEBI" id="CHEBI:17263"/>
        <dbReference type="ChEBI" id="CHEBI:57618"/>
        <dbReference type="ChEBI" id="CHEBI:58210"/>
    </reaction>
    <physiologicalReaction direction="left-to-right" evidence="2">
        <dbReference type="Rhea" id="RHEA:47209"/>
    </physiologicalReaction>
</comment>
<comment type="catalytic activity">
    <reaction evidence="2">
        <text>17beta-hydroxy-5alpha-androstan-3-one + reduced [NADPH--hemoprotein reductase] + O2 = 17beta,19-dihydroxy-3-oxo-5alpha-androstanone + oxidized [NADPH--hemoprotein reductase] + H2O + H(+)</text>
        <dbReference type="Rhea" id="RHEA:53200"/>
        <dbReference type="Rhea" id="RHEA-COMP:11964"/>
        <dbReference type="Rhea" id="RHEA-COMP:11965"/>
        <dbReference type="ChEBI" id="CHEBI:15377"/>
        <dbReference type="ChEBI" id="CHEBI:15378"/>
        <dbReference type="ChEBI" id="CHEBI:15379"/>
        <dbReference type="ChEBI" id="CHEBI:16330"/>
        <dbReference type="ChEBI" id="CHEBI:57618"/>
        <dbReference type="ChEBI" id="CHEBI:58210"/>
        <dbReference type="ChEBI" id="CHEBI:137031"/>
    </reaction>
    <physiologicalReaction direction="left-to-right" evidence="2">
        <dbReference type="Rhea" id="RHEA:53201"/>
    </physiologicalReaction>
</comment>
<comment type="catalytic activity">
    <reaction evidence="2">
        <text>17beta,19-dihydroxy-3-oxo-5alpha-androstanone + reduced [NADPH--hemoprotein reductase] + O2 = 17beta-hydroxy-3,19-dioxo-5alpha-androstanone + oxidized [NADPH--hemoprotein reductase] + 2 H2O + H(+)</text>
        <dbReference type="Rhea" id="RHEA:53204"/>
        <dbReference type="Rhea" id="RHEA-COMP:11964"/>
        <dbReference type="Rhea" id="RHEA-COMP:11965"/>
        <dbReference type="ChEBI" id="CHEBI:15377"/>
        <dbReference type="ChEBI" id="CHEBI:15378"/>
        <dbReference type="ChEBI" id="CHEBI:15379"/>
        <dbReference type="ChEBI" id="CHEBI:57618"/>
        <dbReference type="ChEBI" id="CHEBI:58210"/>
        <dbReference type="ChEBI" id="CHEBI:137031"/>
        <dbReference type="ChEBI" id="CHEBI:137032"/>
    </reaction>
    <physiologicalReaction direction="left-to-right" evidence="2">
        <dbReference type="Rhea" id="RHEA:53205"/>
    </physiologicalReaction>
</comment>
<comment type="catalytic activity">
    <reaction evidence="2">
        <text>17beta-hydroxy-3,19-dioxo-5alpha-androstanone + reduced [NADPH--hemoprotein reductase] + O2 = 17beta-hydroxy-3-oxo-19-nor-5alpha-androst-1-ene + formate + oxidized [NADPH--hemoprotein reductase] + H2O + 2 H(+)</text>
        <dbReference type="Rhea" id="RHEA:53276"/>
        <dbReference type="Rhea" id="RHEA-COMP:11964"/>
        <dbReference type="Rhea" id="RHEA-COMP:11965"/>
        <dbReference type="ChEBI" id="CHEBI:15377"/>
        <dbReference type="ChEBI" id="CHEBI:15378"/>
        <dbReference type="ChEBI" id="CHEBI:15379"/>
        <dbReference type="ChEBI" id="CHEBI:15740"/>
        <dbReference type="ChEBI" id="CHEBI:57618"/>
        <dbReference type="ChEBI" id="CHEBI:58210"/>
        <dbReference type="ChEBI" id="CHEBI:137032"/>
        <dbReference type="ChEBI" id="CHEBI:137110"/>
    </reaction>
    <physiologicalReaction direction="left-to-right" evidence="2">
        <dbReference type="Rhea" id="RHEA:53277"/>
    </physiologicalReaction>
</comment>
<comment type="cofactor">
    <cofactor evidence="2">
        <name>heme</name>
        <dbReference type="ChEBI" id="CHEBI:30413"/>
    </cofactor>
</comment>
<comment type="pathway">
    <text evidence="2">Steroid hormone biosynthesis.</text>
</comment>
<comment type="subcellular location">
    <subcellularLocation>
        <location evidence="2">Endoplasmic reticulum membrane</location>
        <topology evidence="5">Multi-pass membrane protein</topology>
    </subcellularLocation>
    <subcellularLocation>
        <location evidence="2">Microsome membrane</location>
        <topology evidence="5">Multi-pass membrane protein</topology>
    </subcellularLocation>
</comment>
<comment type="similarity">
    <text evidence="5">Belongs to the cytochrome P450 family.</text>
</comment>
<dbReference type="EC" id="1.14.14.14" evidence="2"/>
<dbReference type="EMBL" id="AJ854107">
    <property type="protein sequence ID" value="CAH69600.1"/>
    <property type="molecule type" value="mRNA"/>
</dbReference>
<dbReference type="RefSeq" id="NP_001008715.1">
    <property type="nucleotide sequence ID" value="NM_001008715.1"/>
</dbReference>
<dbReference type="SMR" id="Q5QQX7"/>
<dbReference type="FunCoup" id="Q5QQX7">
    <property type="interactions" value="9"/>
</dbReference>
<dbReference type="STRING" id="9615.ENSCAFP00000022607"/>
<dbReference type="PaxDb" id="9612-ENSCAFP00000022607"/>
<dbReference type="GeneID" id="494003"/>
<dbReference type="KEGG" id="cfa:494003"/>
<dbReference type="CTD" id="1588"/>
<dbReference type="eggNOG" id="KOG0157">
    <property type="taxonomic scope" value="Eukaryota"/>
</dbReference>
<dbReference type="InParanoid" id="Q5QQX7"/>
<dbReference type="OrthoDB" id="1470350at2759"/>
<dbReference type="Proteomes" id="UP000002254">
    <property type="component" value="Unplaced"/>
</dbReference>
<dbReference type="Proteomes" id="UP000694429">
    <property type="component" value="Unplaced"/>
</dbReference>
<dbReference type="Proteomes" id="UP000694542">
    <property type="component" value="Unplaced"/>
</dbReference>
<dbReference type="Proteomes" id="UP000805418">
    <property type="component" value="Unplaced"/>
</dbReference>
<dbReference type="GO" id="GO:0005783">
    <property type="term" value="C:endoplasmic reticulum"/>
    <property type="evidence" value="ECO:0000318"/>
    <property type="project" value="GO_Central"/>
</dbReference>
<dbReference type="GO" id="GO:0005789">
    <property type="term" value="C:endoplasmic reticulum membrane"/>
    <property type="evidence" value="ECO:0007669"/>
    <property type="project" value="UniProtKB-SubCell"/>
</dbReference>
<dbReference type="GO" id="GO:0070330">
    <property type="term" value="F:aromatase activity"/>
    <property type="evidence" value="ECO:0000250"/>
    <property type="project" value="UniProtKB"/>
</dbReference>
<dbReference type="GO" id="GO:0101021">
    <property type="term" value="F:estrogen 2-hydroxylase activity"/>
    <property type="evidence" value="ECO:0007669"/>
    <property type="project" value="RHEA"/>
</dbReference>
<dbReference type="GO" id="GO:0020037">
    <property type="term" value="F:heme binding"/>
    <property type="evidence" value="ECO:0000250"/>
    <property type="project" value="UniProtKB"/>
</dbReference>
<dbReference type="GO" id="GO:0005506">
    <property type="term" value="F:iron ion binding"/>
    <property type="evidence" value="ECO:0007669"/>
    <property type="project" value="InterPro"/>
</dbReference>
<dbReference type="GO" id="GO:0008585">
    <property type="term" value="P:female gonad development"/>
    <property type="evidence" value="ECO:0000318"/>
    <property type="project" value="GO_Central"/>
</dbReference>
<dbReference type="GO" id="GO:0006629">
    <property type="term" value="P:lipid metabolic process"/>
    <property type="evidence" value="ECO:0007669"/>
    <property type="project" value="UniProtKB-KW"/>
</dbReference>
<dbReference type="GO" id="GO:0032355">
    <property type="term" value="P:response to estradiol"/>
    <property type="evidence" value="ECO:0000318"/>
    <property type="project" value="GO_Central"/>
</dbReference>
<dbReference type="CDD" id="cd20616">
    <property type="entry name" value="CYP19A1"/>
    <property type="match status" value="1"/>
</dbReference>
<dbReference type="FunFam" id="1.10.630.10:FF:000032">
    <property type="entry name" value="Cytochrome P450 aromatase"/>
    <property type="match status" value="1"/>
</dbReference>
<dbReference type="Gene3D" id="1.10.630.10">
    <property type="entry name" value="Cytochrome P450"/>
    <property type="match status" value="1"/>
</dbReference>
<dbReference type="InterPro" id="IPR001128">
    <property type="entry name" value="Cyt_P450"/>
</dbReference>
<dbReference type="InterPro" id="IPR017972">
    <property type="entry name" value="Cyt_P450_CS"/>
</dbReference>
<dbReference type="InterPro" id="IPR002401">
    <property type="entry name" value="Cyt_P450_E_grp-I"/>
</dbReference>
<dbReference type="InterPro" id="IPR036396">
    <property type="entry name" value="Cyt_P450_sf"/>
</dbReference>
<dbReference type="InterPro" id="IPR050196">
    <property type="entry name" value="Cytochrome_P450_Monoox"/>
</dbReference>
<dbReference type="PANTHER" id="PTHR24291:SF43">
    <property type="entry name" value="AROMATASE"/>
    <property type="match status" value="1"/>
</dbReference>
<dbReference type="PANTHER" id="PTHR24291">
    <property type="entry name" value="CYTOCHROME P450 FAMILY 4"/>
    <property type="match status" value="1"/>
</dbReference>
<dbReference type="Pfam" id="PF00067">
    <property type="entry name" value="p450"/>
    <property type="match status" value="1"/>
</dbReference>
<dbReference type="PRINTS" id="PR00463">
    <property type="entry name" value="EP450I"/>
</dbReference>
<dbReference type="PRINTS" id="PR00385">
    <property type="entry name" value="P450"/>
</dbReference>
<dbReference type="SUPFAM" id="SSF48264">
    <property type="entry name" value="Cytochrome P450"/>
    <property type="match status" value="1"/>
</dbReference>
<dbReference type="PROSITE" id="PS00086">
    <property type="entry name" value="CYTOCHROME_P450"/>
    <property type="match status" value="1"/>
</dbReference>
<keyword id="KW-0256">Endoplasmic reticulum</keyword>
<keyword id="KW-0349">Heme</keyword>
<keyword id="KW-0408">Iron</keyword>
<keyword id="KW-0443">Lipid metabolism</keyword>
<keyword id="KW-0472">Membrane</keyword>
<keyword id="KW-0479">Metal-binding</keyword>
<keyword id="KW-0492">Microsome</keyword>
<keyword id="KW-0503">Monooxygenase</keyword>
<keyword id="KW-0560">Oxidoreductase</keyword>
<keyword id="KW-1185">Reference proteome</keyword>
<keyword id="KW-0812">Transmembrane</keyword>
<keyword id="KW-1133">Transmembrane helix</keyword>
<organism>
    <name type="scientific">Canis lupus familiaris</name>
    <name type="common">Dog</name>
    <name type="synonym">Canis familiaris</name>
    <dbReference type="NCBI Taxonomy" id="9615"/>
    <lineage>
        <taxon>Eukaryota</taxon>
        <taxon>Metazoa</taxon>
        <taxon>Chordata</taxon>
        <taxon>Craniata</taxon>
        <taxon>Vertebrata</taxon>
        <taxon>Euteleostomi</taxon>
        <taxon>Mammalia</taxon>
        <taxon>Eutheria</taxon>
        <taxon>Laurasiatheria</taxon>
        <taxon>Carnivora</taxon>
        <taxon>Caniformia</taxon>
        <taxon>Canidae</taxon>
        <taxon>Canis</taxon>
    </lineage>
</organism>
<proteinExistence type="evidence at transcript level"/>
<protein>
    <recommendedName>
        <fullName evidence="4">Aromatase</fullName>
        <ecNumber evidence="2">1.14.14.14</ecNumber>
    </recommendedName>
    <alternativeName>
        <fullName>CYPXIX</fullName>
    </alternativeName>
    <alternativeName>
        <fullName>Cytochrome P-450AROM</fullName>
    </alternativeName>
    <alternativeName>
        <fullName>Cytochrome P450 19A1</fullName>
    </alternativeName>
    <alternativeName>
        <fullName>Estrogen synthase</fullName>
    </alternativeName>
</protein>
<gene>
    <name type="primary">CYP19A1</name>
    <name type="synonym">CYP19</name>
</gene>
<reference key="1">
    <citation type="submission" date="2004-11" db="EMBL/GenBank/DDBJ databases">
        <title>Cloning, expression and characterization of dog aromatase gene.</title>
        <authorList>
            <person name="Pappas I.S."/>
        </authorList>
    </citation>
    <scope>NUCLEOTIDE SEQUENCE [MRNA]</scope>
    <source>
        <tissue>Ovary</tissue>
    </source>
</reference>
<sequence length="503" mass="58084">MLLEMLNPMHYNITSMMPEVMPVATMPILLLTGFLLLVWNYEDTSSIPGPGYCMGIGPLISHCRFLWMGIGSACNYYNKMYGEFMRVWICGEETLIISKSSSMFHIMKHSHYSSRFGSKLGLQCIGMHENGIIFNNNPTLWKAIRPFFTKALSGPGLVRMVTVCVGSIITHLDRLEEVSNELGYVDVLTLMRRIMLDTSNILFLGIPLDESAIVVKIQGYFDAWQALLLKPDIFFKISWLYKKYEKSVKDLKDAMEILIEEKRHRISTAEKLEDHMDFATELIFAEKRGDLTRENVNQCILEMLIAAPDTMSVSVFFMLFLIAKHPKVEESIMKEIQAVVGERDIRIDDMQKLKVVENFIYESMRYQPVVNLVMRKALQDDIIDGYLVKKGTNIILNIGRMHRLEFFPKPNEFTLENFAKNVPYRYFQPFGFGPRSCAGKYIAMVMMKVVLVTLLRRFHVQTLQGECIENMQKKYGLSLHPDETNNLLEMVFVPRNSEKCLER</sequence>
<feature type="chain" id="PRO_0000051952" description="Aromatase">
    <location>
        <begin position="1"/>
        <end position="503"/>
    </location>
</feature>
<feature type="transmembrane region" description="Helical" evidence="3">
    <location>
        <begin position="19"/>
        <end position="39"/>
    </location>
</feature>
<feature type="transmembrane region" description="Helical" evidence="3">
    <location>
        <begin position="51"/>
        <end position="71"/>
    </location>
</feature>
<feature type="transmembrane region" description="Helical" evidence="3">
    <location>
        <begin position="303"/>
        <end position="323"/>
    </location>
</feature>
<feature type="binding site" evidence="1">
    <location>
        <position position="309"/>
    </location>
    <ligand>
        <name>substrate</name>
    </ligand>
</feature>
<feature type="binding site" evidence="1">
    <location>
        <position position="374"/>
    </location>
    <ligand>
        <name>substrate</name>
    </ligand>
</feature>
<feature type="binding site" description="axial binding residue" evidence="1">
    <location>
        <position position="437"/>
    </location>
    <ligand>
        <name>heme</name>
        <dbReference type="ChEBI" id="CHEBI:30413"/>
    </ligand>
    <ligandPart>
        <name>Fe</name>
        <dbReference type="ChEBI" id="CHEBI:18248"/>
    </ligandPart>
</feature>
<evidence type="ECO:0000250" key="1"/>
<evidence type="ECO:0000250" key="2">
    <source>
        <dbReference type="UniProtKB" id="P11511"/>
    </source>
</evidence>
<evidence type="ECO:0000255" key="3"/>
<evidence type="ECO:0000303" key="4">
    <source ref="1"/>
</evidence>
<evidence type="ECO:0000305" key="5"/>
<name>CP19A_CANLF</name>
<accession>Q5QQX7</accession>